<organism>
    <name type="scientific">Homo sapiens</name>
    <name type="common">Human</name>
    <dbReference type="NCBI Taxonomy" id="9606"/>
    <lineage>
        <taxon>Eukaryota</taxon>
        <taxon>Metazoa</taxon>
        <taxon>Chordata</taxon>
        <taxon>Craniata</taxon>
        <taxon>Vertebrata</taxon>
        <taxon>Euteleostomi</taxon>
        <taxon>Mammalia</taxon>
        <taxon>Eutheria</taxon>
        <taxon>Euarchontoglires</taxon>
        <taxon>Primates</taxon>
        <taxon>Haplorrhini</taxon>
        <taxon>Catarrhini</taxon>
        <taxon>Hominidae</taxon>
        <taxon>Homo</taxon>
    </lineage>
</organism>
<name>LSHR_HUMAN</name>
<sequence length="699" mass="78643">MKQRFSALQLLKLLLLLQPPLPRALREALCPEPCNCVPDGALRCPGPTAGLTRLSLAYLPVKVIPSQAFRGLNEVIKIEISQIDSLERIEANAFDNLLNLSEILIQNTKNLRYIEPGAFINLPRLKYLSICNTGIRKFPDVTKVFSSESNFILEICDNLHITTIPGNAFQGMNNESVTLKLYGNGFEEVQSHAFNGTTLTSLELKENVHLEKMHNGAFRGATGPKTLDISSTKLQALPSYGLESIQRLIATSSYSLKKLPSRETFVNLLEATLTYPSHCCAFRNLPTKEQNFSHSISENFSKQCESTVRKVNNKTLYSSMLAESELSGWDYEYGFCLPKTPRCAPEPDAFNPCEDIMGYDFLRVLIWLINILAIMGNMTVLFVLLTSRYKLTVPRFLMCNLSFADFCMGLYLLLIASVDSQTKGQYYNHAIDWQTGSGCSTAGFFTVFASELSVYTLTVITLERWHTITYAIHLDQKLRLRHAILIMLGGWLFSSLIAMLPLVGVSNYMKVSICFPMDVETTLSQVYILTILILNVVAFFIICACYIKIYFAVRNPELMATNKDTKIAKKMAILIFTDFTCMAPISFFAISAAFKVPLITVTNSKVLLVLFYPINSCANPFLYAIFTKTFQRDFFLLLSKFGCCKRRAELYRRKDFSAYTSNCKNGFTGSNKPSQSTLKLSTLHCQGTALLDKTRYTEC</sequence>
<dbReference type="EMBL" id="M63108">
    <property type="protein sequence ID" value="AAA59515.1"/>
    <property type="molecule type" value="mRNA"/>
</dbReference>
<dbReference type="EMBL" id="S57793">
    <property type="protein sequence ID" value="AAB19917.2"/>
    <property type="molecule type" value="mRNA"/>
</dbReference>
<dbReference type="EMBL" id="M73746">
    <property type="protein sequence ID" value="AAA70231.1"/>
    <property type="molecule type" value="mRNA"/>
</dbReference>
<dbReference type="EMBL" id="X84753">
    <property type="protein sequence ID" value="CAA59234.1"/>
    <property type="molecule type" value="Genomic_DNA"/>
</dbReference>
<dbReference type="EMBL" id="X84754">
    <property type="protein sequence ID" value="CAA59234.1"/>
    <property type="status" value="JOINED"/>
    <property type="molecule type" value="Genomic_DNA"/>
</dbReference>
<dbReference type="EMBL" id="X84755">
    <property type="protein sequence ID" value="CAA59234.1"/>
    <property type="status" value="JOINED"/>
    <property type="molecule type" value="Genomic_DNA"/>
</dbReference>
<dbReference type="EMBL" id="X84756">
    <property type="protein sequence ID" value="CAA59234.1"/>
    <property type="status" value="JOINED"/>
    <property type="molecule type" value="Genomic_DNA"/>
</dbReference>
<dbReference type="EMBL" id="X84757">
    <property type="protein sequence ID" value="CAA59234.1"/>
    <property type="status" value="JOINED"/>
    <property type="molecule type" value="Genomic_DNA"/>
</dbReference>
<dbReference type="EMBL" id="X84758">
    <property type="protein sequence ID" value="CAA59234.1"/>
    <property type="status" value="JOINED"/>
    <property type="molecule type" value="Genomic_DNA"/>
</dbReference>
<dbReference type="EMBL" id="X84759">
    <property type="protein sequence ID" value="CAA59234.1"/>
    <property type="status" value="JOINED"/>
    <property type="molecule type" value="Genomic_DNA"/>
</dbReference>
<dbReference type="EMBL" id="X84760">
    <property type="protein sequence ID" value="CAA59234.1"/>
    <property type="status" value="JOINED"/>
    <property type="molecule type" value="Genomic_DNA"/>
</dbReference>
<dbReference type="EMBL" id="X84761">
    <property type="protein sequence ID" value="CAA59234.1"/>
    <property type="status" value="JOINED"/>
    <property type="molecule type" value="Genomic_DNA"/>
</dbReference>
<dbReference type="EMBL" id="X84762">
    <property type="protein sequence ID" value="CAA59234.1"/>
    <property type="status" value="JOINED"/>
    <property type="molecule type" value="Genomic_DNA"/>
</dbReference>
<dbReference type="EMBL" id="X84763">
    <property type="protein sequence ID" value="CAA59234.1"/>
    <property type="status" value="JOINED"/>
    <property type="molecule type" value="Genomic_DNA"/>
</dbReference>
<dbReference type="EMBL" id="AC073082">
    <property type="status" value="NOT_ANNOTATED_CDS"/>
    <property type="molecule type" value="Genomic_DNA"/>
</dbReference>
<dbReference type="EMBL" id="AC087816">
    <property type="status" value="NOT_ANNOTATED_CDS"/>
    <property type="molecule type" value="Genomic_DNA"/>
</dbReference>
<dbReference type="EMBL" id="AF082076">
    <property type="protein sequence ID" value="AAC98291.1"/>
    <property type="molecule type" value="Genomic_DNA"/>
</dbReference>
<dbReference type="EMBL" id="AF024642">
    <property type="protein sequence ID" value="AAB88417.1"/>
    <property type="molecule type" value="Genomic_DNA"/>
</dbReference>
<dbReference type="CCDS" id="CCDS1842.1">
    <molecule id="P22888-1"/>
</dbReference>
<dbReference type="PIR" id="A36243">
    <property type="entry name" value="QRHUUT"/>
</dbReference>
<dbReference type="RefSeq" id="NP_000224.2">
    <molecule id="P22888-1"/>
    <property type="nucleotide sequence ID" value="NM_000233.4"/>
</dbReference>
<dbReference type="PDB" id="7FIG">
    <property type="method" value="EM"/>
    <property type="resolution" value="3.90 A"/>
    <property type="chains" value="R=28-699"/>
</dbReference>
<dbReference type="PDB" id="7FIH">
    <property type="method" value="EM"/>
    <property type="resolution" value="3.20 A"/>
    <property type="chains" value="R=28-699"/>
</dbReference>
<dbReference type="PDB" id="7FII">
    <property type="method" value="EM"/>
    <property type="resolution" value="4.30 A"/>
    <property type="chains" value="R=28-699"/>
</dbReference>
<dbReference type="PDB" id="7FIJ">
    <property type="method" value="EM"/>
    <property type="resolution" value="3.80 A"/>
    <property type="chains" value="R=28-699"/>
</dbReference>
<dbReference type="PDBsum" id="7FIG"/>
<dbReference type="PDBsum" id="7FIH"/>
<dbReference type="PDBsum" id="7FII"/>
<dbReference type="PDBsum" id="7FIJ"/>
<dbReference type="EMDB" id="EMD-31596"/>
<dbReference type="EMDB" id="EMD-31597"/>
<dbReference type="EMDB" id="EMD-31598"/>
<dbReference type="EMDB" id="EMD-31599"/>
<dbReference type="SMR" id="P22888"/>
<dbReference type="BioGRID" id="110161">
    <property type="interactions" value="14"/>
</dbReference>
<dbReference type="CORUM" id="P22888"/>
<dbReference type="FunCoup" id="P22888">
    <property type="interactions" value="803"/>
</dbReference>
<dbReference type="IntAct" id="P22888">
    <property type="interactions" value="3"/>
</dbReference>
<dbReference type="MINT" id="P22888"/>
<dbReference type="STRING" id="9606.ENSP00000294954"/>
<dbReference type="BindingDB" id="P22888"/>
<dbReference type="ChEMBL" id="CHEMBL1854"/>
<dbReference type="DrugBank" id="DB06719">
    <property type="generic name" value="Buserelin"/>
</dbReference>
<dbReference type="DrugBank" id="DB00050">
    <property type="generic name" value="Cetrorelix"/>
</dbReference>
<dbReference type="DrugBank" id="DB00097">
    <property type="generic name" value="Choriogonadotropin alfa"/>
</dbReference>
<dbReference type="DrugBank" id="DB09126">
    <property type="generic name" value="Chorionic Gonadotropin (Human)"/>
</dbReference>
<dbReference type="DrugBank" id="DB00014">
    <property type="generic name" value="Goserelin"/>
</dbReference>
<dbReference type="DrugBank" id="DB00044">
    <property type="generic name" value="Lutropin alfa"/>
</dbReference>
<dbReference type="DrugBank" id="DB00032">
    <property type="generic name" value="Menotropins"/>
</dbReference>
<dbReference type="DrugCentral" id="P22888"/>
<dbReference type="GuidetoPHARMACOLOGY" id="254"/>
<dbReference type="GlyCosmos" id="P22888">
    <property type="glycosylation" value="6 sites, No reported glycans"/>
</dbReference>
<dbReference type="GlyGen" id="P22888">
    <property type="glycosylation" value="8 sites"/>
</dbReference>
<dbReference type="iPTMnet" id="P22888"/>
<dbReference type="PhosphoSitePlus" id="P22888"/>
<dbReference type="SwissPalm" id="P22888"/>
<dbReference type="BioMuta" id="LHCGR"/>
<dbReference type="DMDM" id="281185513"/>
<dbReference type="MassIVE" id="P22888"/>
<dbReference type="PaxDb" id="9606-ENSP00000294954"/>
<dbReference type="PeptideAtlas" id="P22888"/>
<dbReference type="Antibodypedia" id="4073">
    <property type="antibodies" value="618 antibodies from 38 providers"/>
</dbReference>
<dbReference type="DNASU" id="3973"/>
<dbReference type="Ensembl" id="ENST00000294954.12">
    <molecule id="P22888-1"/>
    <property type="protein sequence ID" value="ENSP00000294954.6"/>
    <property type="gene ID" value="ENSG00000138039.15"/>
</dbReference>
<dbReference type="GeneID" id="3973"/>
<dbReference type="KEGG" id="hsa:3973"/>
<dbReference type="MANE-Select" id="ENST00000294954.12">
    <property type="protein sequence ID" value="ENSP00000294954.6"/>
    <property type="RefSeq nucleotide sequence ID" value="NM_000233.4"/>
    <property type="RefSeq protein sequence ID" value="NP_000224.2"/>
</dbReference>
<dbReference type="UCSC" id="uc002rwu.5">
    <molecule id="P22888-1"/>
    <property type="organism name" value="human"/>
</dbReference>
<dbReference type="AGR" id="HGNC:6585"/>
<dbReference type="CTD" id="3973"/>
<dbReference type="DisGeNET" id="3973"/>
<dbReference type="GeneCards" id="LHCGR"/>
<dbReference type="HGNC" id="HGNC:6585">
    <property type="gene designation" value="LHCGR"/>
</dbReference>
<dbReference type="HPA" id="ENSG00000138039">
    <property type="expression patterns" value="Tissue enhanced (ovary, testis)"/>
</dbReference>
<dbReference type="MalaCards" id="LHCGR"/>
<dbReference type="MIM" id="152790">
    <property type="type" value="gene+phenotype"/>
</dbReference>
<dbReference type="MIM" id="176410">
    <property type="type" value="phenotype"/>
</dbReference>
<dbReference type="MIM" id="238320">
    <property type="type" value="phenotype"/>
</dbReference>
<dbReference type="neXtProt" id="NX_P22888"/>
<dbReference type="OpenTargets" id="ENSG00000138039"/>
<dbReference type="Orphanet" id="3000">
    <property type="disease" value="Familial peripheral male-limited precocious puberty"/>
</dbReference>
<dbReference type="Orphanet" id="96265">
    <property type="disease" value="Leydig cell hypoplasia due to complete LH resistance"/>
</dbReference>
<dbReference type="Orphanet" id="96266">
    <property type="disease" value="Leydig cell hypoplasia due to partial LH resistance"/>
</dbReference>
<dbReference type="PharmGKB" id="PA30357"/>
<dbReference type="VEuPathDB" id="HostDB:ENSG00000138039"/>
<dbReference type="eggNOG" id="KOG2087">
    <property type="taxonomic scope" value="Eukaryota"/>
</dbReference>
<dbReference type="GeneTree" id="ENSGT00940000157364"/>
<dbReference type="InParanoid" id="P22888"/>
<dbReference type="OMA" id="ECESTMR"/>
<dbReference type="OrthoDB" id="5981530at2759"/>
<dbReference type="PAN-GO" id="P22888">
    <property type="GO annotations" value="11 GO annotations based on evolutionary models"/>
</dbReference>
<dbReference type="PhylomeDB" id="P22888"/>
<dbReference type="TreeFam" id="TF316814"/>
<dbReference type="PathwayCommons" id="P22888"/>
<dbReference type="Reactome" id="R-HSA-375281">
    <property type="pathway name" value="Hormone ligand-binding receptors"/>
</dbReference>
<dbReference type="Reactome" id="R-HSA-418555">
    <property type="pathway name" value="G alpha (s) signalling events"/>
</dbReference>
<dbReference type="SignaLink" id="P22888"/>
<dbReference type="SIGNOR" id="P22888"/>
<dbReference type="BioGRID-ORCS" id="3973">
    <property type="hits" value="9 hits in 1158 CRISPR screens"/>
</dbReference>
<dbReference type="ChiTaRS" id="LHCGR">
    <property type="organism name" value="human"/>
</dbReference>
<dbReference type="GeneWiki" id="Luteinizing_hormone/choriogonadotropin_receptor"/>
<dbReference type="GenomeRNAi" id="3973"/>
<dbReference type="Pharos" id="P22888">
    <property type="development level" value="Tclin"/>
</dbReference>
<dbReference type="PRO" id="PR:P22888"/>
<dbReference type="Proteomes" id="UP000005640">
    <property type="component" value="Chromosome 2"/>
</dbReference>
<dbReference type="RNAct" id="P22888">
    <property type="molecule type" value="protein"/>
</dbReference>
<dbReference type="Bgee" id="ENSG00000138039">
    <property type="expression patterns" value="Expressed in male germ line stem cell (sensu Vertebrata) in testis and 89 other cell types or tissues"/>
</dbReference>
<dbReference type="ExpressionAtlas" id="P22888">
    <property type="expression patterns" value="baseline and differential"/>
</dbReference>
<dbReference type="GO" id="GO:0034451">
    <property type="term" value="C:centriolar satellite"/>
    <property type="evidence" value="ECO:0000314"/>
    <property type="project" value="HPA"/>
</dbReference>
<dbReference type="GO" id="GO:0005768">
    <property type="term" value="C:endosome"/>
    <property type="evidence" value="ECO:0000304"/>
    <property type="project" value="ProtInc"/>
</dbReference>
<dbReference type="GO" id="GO:0005886">
    <property type="term" value="C:plasma membrane"/>
    <property type="evidence" value="ECO:0000314"/>
    <property type="project" value="HPA"/>
</dbReference>
<dbReference type="GO" id="GO:0038106">
    <property type="term" value="F:choriogonadotropin hormone binding"/>
    <property type="evidence" value="ECO:0000250"/>
    <property type="project" value="BHF-UCL"/>
</dbReference>
<dbReference type="GO" id="GO:0035472">
    <property type="term" value="F:choriogonadotropin hormone receptor activity"/>
    <property type="evidence" value="ECO:0000250"/>
    <property type="project" value="BHF-UCL"/>
</dbReference>
<dbReference type="GO" id="GO:0008528">
    <property type="term" value="F:G protein-coupled peptide receptor activity"/>
    <property type="evidence" value="ECO:0000318"/>
    <property type="project" value="GO_Central"/>
</dbReference>
<dbReference type="GO" id="GO:0004964">
    <property type="term" value="F:luteinizing hormone receptor activity"/>
    <property type="evidence" value="ECO:0000315"/>
    <property type="project" value="UniProtKB"/>
</dbReference>
<dbReference type="GO" id="GO:0007189">
    <property type="term" value="P:adenylate cyclase-activating G protein-coupled receptor signaling pathway"/>
    <property type="evidence" value="ECO:0000250"/>
    <property type="project" value="BHF-UCL"/>
</dbReference>
<dbReference type="GO" id="GO:0071371">
    <property type="term" value="P:cellular response to gonadotropin stimulus"/>
    <property type="evidence" value="ECO:0000250"/>
    <property type="project" value="BHF-UCL"/>
</dbReference>
<dbReference type="GO" id="GO:0071373">
    <property type="term" value="P:cellular response to luteinizing hormone stimulus"/>
    <property type="evidence" value="ECO:0000315"/>
    <property type="project" value="UniProtKB"/>
</dbReference>
<dbReference type="GO" id="GO:0050890">
    <property type="term" value="P:cognition"/>
    <property type="evidence" value="ECO:0000315"/>
    <property type="project" value="UniProtKB"/>
</dbReference>
<dbReference type="GO" id="GO:0046544">
    <property type="term" value="P:development of secondary male sexual characteristics"/>
    <property type="evidence" value="ECO:0007669"/>
    <property type="project" value="Ensembl"/>
</dbReference>
<dbReference type="GO" id="GO:0007186">
    <property type="term" value="P:G protein-coupled receptor signaling pathway"/>
    <property type="evidence" value="ECO:0000304"/>
    <property type="project" value="ProtInc"/>
</dbReference>
<dbReference type="GO" id="GO:0007187">
    <property type="term" value="P:G protein-coupled receptor signaling pathway, coupled to cyclic nucleotide second messenger"/>
    <property type="evidence" value="ECO:0000304"/>
    <property type="project" value="ProtInc"/>
</dbReference>
<dbReference type="GO" id="GO:0009755">
    <property type="term" value="P:hormone-mediated signaling pathway"/>
    <property type="evidence" value="ECO:0000318"/>
    <property type="project" value="GO_Central"/>
</dbReference>
<dbReference type="GO" id="GO:0042700">
    <property type="term" value="P:luteinizing hormone signaling pathway"/>
    <property type="evidence" value="ECO:0000315"/>
    <property type="project" value="UniProtKB"/>
</dbReference>
<dbReference type="GO" id="GO:0030539">
    <property type="term" value="P:male genitalia development"/>
    <property type="evidence" value="ECO:0000304"/>
    <property type="project" value="ProtInc"/>
</dbReference>
<dbReference type="GO" id="GO:0008584">
    <property type="term" value="P:male gonad development"/>
    <property type="evidence" value="ECO:0000318"/>
    <property type="project" value="GO_Central"/>
</dbReference>
<dbReference type="GO" id="GO:0001541">
    <property type="term" value="P:ovarian follicle development"/>
    <property type="evidence" value="ECO:0000318"/>
    <property type="project" value="GO_Central"/>
</dbReference>
<dbReference type="GO" id="GO:0022602">
    <property type="term" value="P:ovulation cycle process"/>
    <property type="evidence" value="ECO:0000318"/>
    <property type="project" value="GO_Central"/>
</dbReference>
<dbReference type="GO" id="GO:0007200">
    <property type="term" value="P:phospholipase C-activating G protein-coupled receptor signaling pathway"/>
    <property type="evidence" value="ECO:0000250"/>
    <property type="project" value="BHF-UCL"/>
</dbReference>
<dbReference type="GO" id="GO:0032962">
    <property type="term" value="P:positive regulation of inositol trisphosphate biosynthetic process"/>
    <property type="evidence" value="ECO:0000250"/>
    <property type="project" value="BHF-UCL"/>
</dbReference>
<dbReference type="GO" id="GO:0090030">
    <property type="term" value="P:regulation of steroid hormone biosynthetic process"/>
    <property type="evidence" value="ECO:0007669"/>
    <property type="project" value="Ensembl"/>
</dbReference>
<dbReference type="GO" id="GO:0072520">
    <property type="term" value="P:seminiferous tubule development"/>
    <property type="evidence" value="ECO:0007669"/>
    <property type="project" value="Ensembl"/>
</dbReference>
<dbReference type="GO" id="GO:0007283">
    <property type="term" value="P:spermatogenesis"/>
    <property type="evidence" value="ECO:0007669"/>
    <property type="project" value="Ensembl"/>
</dbReference>
<dbReference type="GO" id="GO:0060065">
    <property type="term" value="P:uterus development"/>
    <property type="evidence" value="ECO:0007669"/>
    <property type="project" value="Ensembl"/>
</dbReference>
<dbReference type="CDD" id="cd15359">
    <property type="entry name" value="7tmA_LHCGR"/>
    <property type="match status" value="1"/>
</dbReference>
<dbReference type="FunFam" id="1.20.1070.10:FF:000019">
    <property type="entry name" value="Lutropin-choriogonadotropic hormone receptor"/>
    <property type="match status" value="1"/>
</dbReference>
<dbReference type="FunFam" id="3.80.10.10:FF:000128">
    <property type="entry name" value="Lutropin-choriogonadotropic hormone receptor"/>
    <property type="match status" value="1"/>
</dbReference>
<dbReference type="Gene3D" id="1.20.1070.10">
    <property type="entry name" value="Rhodopsin 7-helix transmembrane proteins"/>
    <property type="match status" value="1"/>
</dbReference>
<dbReference type="Gene3D" id="3.80.10.10">
    <property type="entry name" value="Ribonuclease Inhibitor"/>
    <property type="match status" value="1"/>
</dbReference>
<dbReference type="InterPro" id="IPR000276">
    <property type="entry name" value="GPCR_Rhodpsn"/>
</dbReference>
<dbReference type="InterPro" id="IPR017452">
    <property type="entry name" value="GPCR_Rhodpsn_7TM"/>
</dbReference>
<dbReference type="InterPro" id="IPR002131">
    <property type="entry name" value="Gphrmn_rcpt_fam"/>
</dbReference>
<dbReference type="InterPro" id="IPR026906">
    <property type="entry name" value="LRR_5"/>
</dbReference>
<dbReference type="InterPro" id="IPR032675">
    <property type="entry name" value="LRR_dom_sf"/>
</dbReference>
<dbReference type="InterPro" id="IPR002273">
    <property type="entry name" value="LSH_rcpt"/>
</dbReference>
<dbReference type="PANTHER" id="PTHR24372">
    <property type="entry name" value="GLYCOPROTEIN HORMONE RECEPTOR"/>
    <property type="match status" value="1"/>
</dbReference>
<dbReference type="PANTHER" id="PTHR24372:SF1">
    <property type="entry name" value="LUTROPIN-CHORIOGONADOTROPIC HORMONE RECEPTOR"/>
    <property type="match status" value="1"/>
</dbReference>
<dbReference type="Pfam" id="PF00001">
    <property type="entry name" value="7tm_1"/>
    <property type="match status" value="1"/>
</dbReference>
<dbReference type="Pfam" id="PF13306">
    <property type="entry name" value="LRR_5"/>
    <property type="match status" value="2"/>
</dbReference>
<dbReference type="PRINTS" id="PR00373">
    <property type="entry name" value="GLYCHORMONER"/>
</dbReference>
<dbReference type="PRINTS" id="PR00237">
    <property type="entry name" value="GPCRRHODOPSN"/>
</dbReference>
<dbReference type="PRINTS" id="PR01144">
    <property type="entry name" value="LSHRECEPTOR"/>
</dbReference>
<dbReference type="SUPFAM" id="SSF81321">
    <property type="entry name" value="Family A G protein-coupled receptor-like"/>
    <property type="match status" value="1"/>
</dbReference>
<dbReference type="SUPFAM" id="SSF52058">
    <property type="entry name" value="L domain-like"/>
    <property type="match status" value="1"/>
</dbReference>
<dbReference type="PROSITE" id="PS00237">
    <property type="entry name" value="G_PROTEIN_RECEP_F1_1"/>
    <property type="match status" value="1"/>
</dbReference>
<dbReference type="PROSITE" id="PS50262">
    <property type="entry name" value="G_PROTEIN_RECEP_F1_2"/>
    <property type="match status" value="1"/>
</dbReference>
<proteinExistence type="evidence at protein level"/>
<comment type="function">
    <text evidence="7">Receptor for lutropin-choriogonadotropic hormone (PubMed:11847099). The activity of this receptor is mediated by G proteins which activate adenylate cyclase (PubMed:11847099).</text>
</comment>
<comment type="subcellular location">
    <subcellularLocation>
        <location evidence="7">Cell membrane</location>
        <topology evidence="35">Multi-pass membrane protein</topology>
    </subcellularLocation>
</comment>
<comment type="alternative products">
    <event type="alternative splicing"/>
    <isoform>
        <id>P22888-1</id>
        <name>Long</name>
        <sequence type="displayed"/>
    </isoform>
    <isoform>
        <id>P22888-2</id>
        <name>Short</name>
        <sequence type="described" ref="VSP_001962"/>
    </isoform>
    <text>Additional isoforms seem to exist.</text>
</comment>
<comment type="tissue specificity">
    <text>Gonadal and thyroid cells.</text>
</comment>
<comment type="PTM">
    <text evidence="7">Sulfated.</text>
</comment>
<comment type="disease" evidence="5 6 16 17 18 20 21 22 24 25 27 31 34">
    <disease id="DI-01592">
        <name>Familial male precocious puberty</name>
        <acronym>FMPP</acronym>
        <description>In FMPP the receptor is constitutively activated.</description>
        <dbReference type="MIM" id="176410"/>
    </disease>
    <text>The disease is caused by variants affecting the gene represented in this entry.</text>
</comment>
<comment type="disease" evidence="8 9 10 13 19 23 26 28 29 30">
    <disease id="DI-01902">
        <name>Luteinizing hormone resistance</name>
        <acronym>LHR</acronym>
        <description>An autosomal recessive disorder characterized by unresponsiveness to luteinizing hormone, defective sexual development in males, and defective follicular development and ovulation, amenorrhea and infertility in females. Two forms of the disorder have been defined in males. Type 1 is a severe form characterized by complete 46,XY male pseudohermaphroditism, low testosterone and high luteinizing hormone levels, total lack of responsiveness to luteinizing and chorionic gonadotropin hormones, lack of breast development, and absent development of secondary male sex characteristics. Type 2, a milder form, displays a broader range of phenotypic expression ranging from micropenis to severe hypospadias.</description>
        <dbReference type="MIM" id="238320"/>
    </disease>
    <text>The disease is caused by variants affecting the gene represented in this entry.</text>
</comment>
<comment type="similarity">
    <text evidence="2">Belongs to the G-protein coupled receptor 1 family. FSH/LSH/TSH subfamily.</text>
</comment>
<comment type="online information" name="Atlas of Genetics and Cytogenetics in Oncology and Haematology">
    <link uri="https://atlasgeneticsoncology.org/gene/288/LHR"/>
</comment>
<gene>
    <name type="primary">LHCGR</name>
    <name type="synonym">LCGR</name>
    <name type="synonym">LGR2</name>
    <name type="synonym">LHRHR</name>
</gene>
<feature type="signal peptide" evidence="1">
    <location>
        <begin position="1"/>
        <end position="26"/>
    </location>
</feature>
<feature type="chain" id="PRO_0000012780" description="Lutropin-choriogonadotropic hormone receptor">
    <location>
        <begin position="27"/>
        <end position="699"/>
    </location>
</feature>
<feature type="topological domain" description="Extracellular" evidence="1">
    <location>
        <begin position="27"/>
        <end position="363"/>
    </location>
</feature>
<feature type="transmembrane region" description="Helical; Name=1" evidence="1">
    <location>
        <begin position="364"/>
        <end position="385"/>
    </location>
</feature>
<feature type="topological domain" description="Cytoplasmic" evidence="1">
    <location>
        <begin position="386"/>
        <end position="395"/>
    </location>
</feature>
<feature type="transmembrane region" description="Helical; Name=2" evidence="1">
    <location>
        <begin position="396"/>
        <end position="416"/>
    </location>
</feature>
<feature type="topological domain" description="Extracellular" evidence="1">
    <location>
        <begin position="417"/>
        <end position="439"/>
    </location>
</feature>
<feature type="transmembrane region" description="Helical; Name=3" evidence="1">
    <location>
        <begin position="440"/>
        <end position="462"/>
    </location>
</feature>
<feature type="topological domain" description="Cytoplasmic" evidence="1">
    <location>
        <begin position="463"/>
        <end position="482"/>
    </location>
</feature>
<feature type="transmembrane region" description="Helical; Name=4" evidence="1">
    <location>
        <begin position="483"/>
        <end position="505"/>
    </location>
</feature>
<feature type="topological domain" description="Extracellular" evidence="1">
    <location>
        <begin position="506"/>
        <end position="525"/>
    </location>
</feature>
<feature type="transmembrane region" description="Helical; Name=5" evidence="1">
    <location>
        <begin position="526"/>
        <end position="549"/>
    </location>
</feature>
<feature type="topological domain" description="Cytoplasmic" evidence="1">
    <location>
        <begin position="550"/>
        <end position="570"/>
    </location>
</feature>
<feature type="transmembrane region" description="Helical; Name=6" evidence="1">
    <location>
        <begin position="571"/>
        <end position="594"/>
    </location>
</feature>
<feature type="topological domain" description="Extracellular" evidence="1">
    <location>
        <begin position="595"/>
        <end position="605"/>
    </location>
</feature>
<feature type="transmembrane region" description="Helical; Name=7" evidence="1">
    <location>
        <begin position="606"/>
        <end position="627"/>
    </location>
</feature>
<feature type="topological domain" description="Cytoplasmic" evidence="1">
    <location>
        <begin position="628"/>
        <end position="699"/>
    </location>
</feature>
<feature type="domain" description="LRRNT">
    <location>
        <begin position="27"/>
        <end position="66"/>
    </location>
</feature>
<feature type="repeat" description="LRR 1">
    <location>
        <begin position="96"/>
        <end position="115"/>
    </location>
</feature>
<feature type="repeat" description="LRR 2">
    <location>
        <begin position="124"/>
        <end position="145"/>
    </location>
</feature>
<feature type="repeat" description="LRR 3">
    <location>
        <begin position="149"/>
        <end position="171"/>
    </location>
</feature>
<feature type="repeat" description="LRR 4">
    <location>
        <begin position="175"/>
        <end position="196"/>
    </location>
</feature>
<feature type="repeat" description="LRR 5">
    <location>
        <begin position="198"/>
        <end position="220"/>
    </location>
</feature>
<feature type="repeat" description="LRR 6">
    <location>
        <begin position="223"/>
        <end position="244"/>
    </location>
</feature>
<feature type="modified residue" description="Sulfotyrosine" evidence="36">
    <location>
        <position position="331"/>
    </location>
</feature>
<feature type="lipid moiety-binding region" description="S-palmitoyl cysteine" evidence="11">
    <location>
        <position position="643"/>
    </location>
</feature>
<feature type="lipid moiety-binding region" description="S-palmitoyl cysteine" evidence="11">
    <location>
        <position position="644"/>
    </location>
</feature>
<feature type="glycosylation site" description="N-linked (GlcNAc...) asparagine" evidence="1">
    <location>
        <position position="99"/>
    </location>
</feature>
<feature type="glycosylation site" description="N-linked (GlcNAc...) asparagine" evidence="1">
    <location>
        <position position="174"/>
    </location>
</feature>
<feature type="glycosylation site" description="N-linked (GlcNAc...) asparagine" evidence="1">
    <location>
        <position position="195"/>
    </location>
</feature>
<feature type="glycosylation site" description="N-linked (GlcNAc...) asparagine" evidence="1">
    <location>
        <position position="291"/>
    </location>
</feature>
<feature type="glycosylation site" description="N-linked (GlcNAc...) asparagine" evidence="1">
    <location>
        <position position="299"/>
    </location>
</feature>
<feature type="glycosylation site" description="N-linked (GlcNAc...) asparagine" evidence="1">
    <location>
        <position position="313"/>
    </location>
</feature>
<feature type="disulfide bond" evidence="2">
    <location>
        <begin position="439"/>
        <end position="514"/>
    </location>
</feature>
<feature type="splice variant" id="VSP_001962" description="In isoform Short." evidence="35">
    <location>
        <begin position="227"/>
        <end position="289"/>
    </location>
</feature>
<feature type="sequence variant" id="VAR_003549" evidence="32 33">
    <original>Q</original>
    <variation>QLQ</variation>
    <location>
        <position position="18"/>
    </location>
</feature>
<feature type="sequence variant" id="VAR_010154" description="In LHR; Leydig cell hypoplasia type 2; dbSNP:rs121912527." evidence="26">
    <original>C</original>
    <variation>R</variation>
    <location>
        <position position="131"/>
    </location>
</feature>
<feature type="sequence variant" id="VAR_062336" description="In LHR; Leydig cell hypoplasia type 1; exhibits a marked impairment of human chorionic gonadotropin binding; shows the absence of the glycosylated cell surface form; the mutant receptor is retained in the endoplasmic reticulum; mutant receptors do not migrate to the cell surface; dbSNP:rs121912539." evidence="10">
    <original>V</original>
    <variation>F</variation>
    <location>
        <position position="144"/>
    </location>
</feature>
<feature type="sequence variant" id="VAR_062337" description="In LHR; reveals a marked impairment of human chorionic gonadotropin binding and signal transduction." evidence="13">
    <original>I</original>
    <variation>T</variation>
    <location>
        <position position="152"/>
    </location>
</feature>
<feature type="sequence variant" id="VAR_003550" evidence="3">
    <original>N</original>
    <variation>S</variation>
    <location>
        <position position="284"/>
    </location>
</feature>
<feature type="sequence variant" id="VAR_055922" description="In dbSNP:rs12470652.">
    <original>N</original>
    <variation>S</variation>
    <location>
        <position position="291"/>
    </location>
</feature>
<feature type="sequence variant" id="VAR_003551" evidence="3">
    <original>S</original>
    <variation>N</variation>
    <location>
        <position position="306"/>
    </location>
</feature>
<feature type="sequence variant" id="VAR_060737" description="In dbSNP:rs2293275." evidence="14 15">
    <original>N</original>
    <variation>S</variation>
    <location>
        <position position="312"/>
    </location>
</feature>
<feature type="sequence variant" id="VAR_010155" description="In LHR; Leydig cell hypoplasia type 1; completely devoided of hormone-induced cAMP reporter gene activation; although initial translocation to the endoplasmic reticulum is normal translocation is halted or misrouted and the mutant does not reach the cell surface and cannot bind hormone; dbSNP:rs121912536." evidence="8">
    <original>C</original>
    <variation>S</variation>
    <location>
        <position position="343"/>
    </location>
</feature>
<feature type="sequence variant" id="VAR_003552" description="In LHR; Leydig cell hypoplasia type 1; dbSNP:rs121912529." evidence="29">
    <original>E</original>
    <variation>K</variation>
    <location>
        <position position="354"/>
    </location>
</feature>
<feature type="sequence variant" id="VAR_062338" description="In FMPP; cells expressing the mutation display up to a 12-fold increase in basal cAMP production compared with cells expressing the same number of cell surface wild-type receptor indicating constitutive activation of the mutant receptor; dbSNP:rs121912533." evidence="5">
    <original>L</original>
    <variation>P</variation>
    <location>
        <position position="368"/>
    </location>
</feature>
<feature type="sequence variant" id="VAR_003553" description="In FMPP; dbSNP:rs121912528." evidence="27">
    <original>A</original>
    <variation>V</variation>
    <location>
        <position position="373"/>
    </location>
</feature>
<feature type="sequence variant" id="VAR_003554" description="In FMPP; dbSNP:rs121912526." evidence="25">
    <original>M</original>
    <variation>T</variation>
    <location>
        <position position="398"/>
    </location>
</feature>
<feature type="sequence variant" id="VAR_010156" description="In FMPP; dbSNP:rs121912535." evidence="31">
    <original>L</original>
    <variation>R</variation>
    <location>
        <position position="457"/>
    </location>
</feature>
<feature type="sequence variant" id="VAR_062339" description="In LHR; Leydig cell hypoplasia type 1; shows reduced cAMP production and ligand binding; receptor trafficking is not affected by the mutation; dbSNP:rs121912538." evidence="9">
    <original>L</original>
    <variation>P</variation>
    <location>
        <position position="502"/>
    </location>
</feature>
<feature type="sequence variant" id="VAR_010157" description="In FMPP; dbSNP:rs121912531." evidence="21">
    <original>I</original>
    <variation>L</variation>
    <location>
        <position position="542"/>
    </location>
</feature>
<feature type="sequence variant" id="VAR_010158" description="In LHR; Leydig cell hypoplasia type 1; completely devoided of hormone-induced cAMP reporter gene activation; although initial translocation to the endoplasmic reticulum is normal translocation is halted or misrouted and the mutant does not reach the cell surface and cannot bind hormone; dbSNP:rs121912537." evidence="8">
    <original>C</original>
    <variation>R</variation>
    <location>
        <position position="543"/>
    </location>
</feature>
<feature type="sequence variant" id="VAR_010159" description="In FMPP; dbSNP:rs121912540." evidence="6">
    <original>D</original>
    <variation>G</variation>
    <location>
        <position position="564"/>
    </location>
</feature>
<feature type="sequence variant" id="VAR_035764" description="In a breast cancer sample; somatic mutation." evidence="12">
    <original>D</original>
    <variation>N</variation>
    <location>
        <position position="564"/>
    </location>
</feature>
<feature type="sequence variant" id="VAR_003555" description="In FMPP; dbSNP:rs121912534." evidence="5 16">
    <original>A</original>
    <variation>V</variation>
    <location>
        <position position="568"/>
    </location>
</feature>
<feature type="sequence variant" id="VAR_003556" description="In FMPP; dbSNP:rs121912519." evidence="22">
    <original>M</original>
    <variation>I</variation>
    <location>
        <position position="571"/>
    </location>
</feature>
<feature type="sequence variant" id="VAR_003557" description="In FMPP; dbSNP:rs121912522." evidence="18">
    <original>A</original>
    <variation>V</variation>
    <location>
        <position position="572"/>
    </location>
</feature>
<feature type="sequence variant" id="VAR_010160" description="In FMPP; dbSNP:rs767343825.">
    <original>I</original>
    <variation>L</variation>
    <location>
        <position position="575"/>
    </location>
</feature>
<feature type="sequence variant" id="VAR_003558" description="In FMPP; dbSNP:rs121912521." evidence="20 24">
    <original>T</original>
    <variation>I</variation>
    <location>
        <position position="577"/>
    </location>
</feature>
<feature type="sequence variant" id="VAR_010161" description="In FMPP." evidence="34">
    <original>D</original>
    <variation>E</variation>
    <location>
        <position position="578"/>
    </location>
</feature>
<feature type="sequence variant" id="VAR_003559" description="In FMPP; dbSNP:rs121912518." evidence="17 22">
    <original>D</original>
    <variation>G</variation>
    <location>
        <position position="578"/>
    </location>
</feature>
<feature type="sequence variant" id="VAR_010162" description="In Leydig cell tumor; somatic mutation; causes receptor activation and precocious puberty; dbSNP:rs121912532." evidence="4">
    <original>D</original>
    <variation>H</variation>
    <location>
        <position position="578"/>
    </location>
</feature>
<feature type="sequence variant" id="VAR_010163" description="In FMPP; dbSNP:rs121912532." evidence="21">
    <original>D</original>
    <variation>Y</variation>
    <location>
        <position position="578"/>
    </location>
</feature>
<feature type="sequence variant" id="VAR_010164" description="In FMPP." evidence="21">
    <original>C</original>
    <variation>R</variation>
    <location>
        <position position="581"/>
    </location>
</feature>
<feature type="sequence variant" id="VAR_003560" description="In LHR; Leydig cell hypoplasia type 1; abolishes signal transduction; dbSNP:rs121912520." evidence="19">
    <original>A</original>
    <variation>P</variation>
    <location>
        <position position="593"/>
    </location>
</feature>
<feature type="sequence variant" id="VAR_003561" description="In LHR; Leydig cell hypoplasia type 1." evidence="28">
    <location>
        <begin position="608"/>
        <end position="609"/>
    </location>
</feature>
<feature type="sequence variant" id="VAR_003562" description="In LHR; Leydig cell hypoplasia type 1; micropenis; dbSNP:rs121912525." evidence="23">
    <original>S</original>
    <variation>Y</variation>
    <location>
        <position position="616"/>
    </location>
</feature>
<feature type="sequence variant" id="VAR_003563" description="In LHR; Leydig cell hypoplasia type 2; dbSNP:rs121912530." evidence="30">
    <original>I</original>
    <variation>K</variation>
    <location>
        <position position="625"/>
    </location>
</feature>
<feature type="mutagenesis site" description="Reduces intracellular cAMP accumulation." evidence="7">
    <original>Y</original>
    <variation>F</variation>
    <location>
        <position position="331"/>
    </location>
</feature>
<feature type="mutagenesis site" description="No change in intracellular cAMP accumulation." evidence="7">
    <original>Y</original>
    <variation>F</variation>
    <location>
        <position position="333"/>
    </location>
</feature>
<feature type="mutagenesis site" description="Loss of palmitoylation." evidence="11">
    <original>C</original>
    <variation>G</variation>
    <location>
        <position position="643"/>
    </location>
</feature>
<feature type="mutagenesis site" description="Loss of palmitoylation." evidence="11">
    <original>C</original>
    <variation>G</variation>
    <location>
        <position position="644"/>
    </location>
</feature>
<feature type="sequence conflict" description="In Ref. 3; AAA70231." evidence="35" ref="3">
    <original>A</original>
    <variation>P</variation>
    <location>
        <position position="7"/>
    </location>
</feature>
<feature type="sequence conflict" description="In Ref. 3; AAA70231." evidence="35" ref="3">
    <original>P</original>
    <variation>A</variation>
    <location>
        <position position="19"/>
    </location>
</feature>
<feature type="sequence conflict" description="In Ref. 3; AAA70231." evidence="35" ref="3">
    <original>EA</original>
    <variation>R</variation>
    <location>
        <begin position="27"/>
        <end position="28"/>
    </location>
</feature>
<feature type="sequence conflict" description="In Ref. 3; AAA70231." evidence="35" ref="3">
    <original>CPGPTAGL</original>
    <variation>APAPRPS</variation>
    <location>
        <begin position="44"/>
        <end position="51"/>
    </location>
</feature>
<feature type="sequence conflict" description="In Ref. 3; AAA70231." evidence="35" ref="3">
    <original>A</original>
    <variation>S</variation>
    <location>
        <position position="68"/>
    </location>
</feature>
<feature type="sequence conflict" description="In Ref. 1; AAA59515 and 4; CAA59234." evidence="35" ref="1 4">
    <original>R</original>
    <variation>G</variation>
    <location>
        <position position="124"/>
    </location>
</feature>
<feature type="sequence conflict" description="In Ref. 3; AAA70231." evidence="35" ref="3">
    <original>RE</original>
    <variation>KQ</variation>
    <location>
        <begin position="262"/>
        <end position="263"/>
    </location>
</feature>
<feature type="sequence conflict" description="In Ref. 3; AAA70231." evidence="35" ref="3">
    <original>E</original>
    <variation>R</variation>
    <location>
        <position position="270"/>
    </location>
</feature>
<feature type="sequence conflict" description="In Ref. 3; AAA70231." evidence="35" ref="3">
    <original>T</original>
    <variation>H</variation>
    <location>
        <position position="274"/>
    </location>
</feature>
<feature type="sequence conflict" description="In Ref. 3; AAA70231." evidence="35" ref="3">
    <original>Q</original>
    <variation>L</variation>
    <location>
        <position position="290"/>
    </location>
</feature>
<feature type="sequence conflict" description="In Ref. 3; AAA70231." evidence="35" ref="3">
    <location>
        <begin position="311"/>
        <end position="323"/>
    </location>
</feature>
<feature type="sequence conflict" description="In Ref. 3; AAA70231." evidence="35" ref="3">
    <original>F</original>
    <variation>L</variation>
    <location>
        <position position="448"/>
    </location>
</feature>
<feature type="sequence conflict" description="In Ref. 3; AAA70231." evidence="35" ref="3">
    <original>F</original>
    <variation>L</variation>
    <location>
        <position position="540"/>
    </location>
</feature>
<feature type="sequence conflict" description="In Ref. 3; AAA70231." evidence="35" ref="3">
    <original>E</original>
    <variation>DP</variation>
    <location>
        <position position="649"/>
    </location>
</feature>
<feature type="strand" evidence="37">
    <location>
        <begin position="53"/>
        <end position="58"/>
    </location>
</feature>
<feature type="turn" evidence="37">
    <location>
        <begin position="66"/>
        <end position="71"/>
    </location>
</feature>
<feature type="strand" evidence="37">
    <location>
        <begin position="77"/>
        <end position="82"/>
    </location>
</feature>
<feature type="turn" evidence="37">
    <location>
        <begin position="91"/>
        <end position="93"/>
    </location>
</feature>
<feature type="strand" evidence="37">
    <location>
        <begin position="102"/>
        <end position="105"/>
    </location>
</feature>
<feature type="strand" evidence="37">
    <location>
        <begin position="127"/>
        <end position="133"/>
    </location>
</feature>
<feature type="strand" evidence="37">
    <location>
        <begin position="151"/>
        <end position="157"/>
    </location>
</feature>
<feature type="turn" evidence="37">
    <location>
        <begin position="166"/>
        <end position="171"/>
    </location>
</feature>
<feature type="strand" evidence="37">
    <location>
        <begin position="172"/>
        <end position="175"/>
    </location>
</feature>
<feature type="strand" evidence="37">
    <location>
        <begin position="177"/>
        <end position="180"/>
    </location>
</feature>
<feature type="strand" evidence="37">
    <location>
        <begin position="193"/>
        <end position="203"/>
    </location>
</feature>
<feature type="turn" evidence="37">
    <location>
        <begin position="215"/>
        <end position="218"/>
    </location>
</feature>
<feature type="strand" evidence="37">
    <location>
        <begin position="219"/>
        <end position="222"/>
    </location>
</feature>
<feature type="strand" evidence="37">
    <location>
        <begin position="225"/>
        <end position="228"/>
    </location>
</feature>
<feature type="strand" evidence="37">
    <location>
        <begin position="239"/>
        <end position="241"/>
    </location>
</feature>
<feature type="helix" evidence="37">
    <location>
        <begin position="242"/>
        <end position="244"/>
    </location>
</feature>
<feature type="strand" evidence="37">
    <location>
        <begin position="246"/>
        <end position="249"/>
    </location>
</feature>
<feature type="helix" evidence="37">
    <location>
        <begin position="262"/>
        <end position="264"/>
    </location>
</feature>
<feature type="strand" evidence="37">
    <location>
        <begin position="270"/>
        <end position="272"/>
    </location>
</feature>
<feature type="helix" evidence="37">
    <location>
        <begin position="276"/>
        <end position="282"/>
    </location>
</feature>
<feature type="strand" evidence="37">
    <location>
        <begin position="343"/>
        <end position="345"/>
    </location>
</feature>
<feature type="helix" evidence="37">
    <location>
        <begin position="360"/>
        <end position="372"/>
    </location>
</feature>
<feature type="helix" evidence="37">
    <location>
        <begin position="375"/>
        <end position="385"/>
    </location>
</feature>
<feature type="helix" evidence="37">
    <location>
        <begin position="393"/>
        <end position="421"/>
    </location>
</feature>
<feature type="turn" evidence="37">
    <location>
        <begin position="422"/>
        <end position="424"/>
    </location>
</feature>
<feature type="helix" evidence="37">
    <location>
        <begin position="426"/>
        <end position="434"/>
    </location>
</feature>
<feature type="helix" evidence="37">
    <location>
        <begin position="437"/>
        <end position="469"/>
    </location>
</feature>
<feature type="helix" evidence="37">
    <location>
        <begin position="480"/>
        <end position="497"/>
    </location>
</feature>
<feature type="helix" evidence="37">
    <location>
        <begin position="500"/>
        <end position="503"/>
    </location>
</feature>
<feature type="helix" evidence="37">
    <location>
        <begin position="522"/>
        <end position="553"/>
    </location>
</feature>
<feature type="strand" evidence="37">
    <location>
        <begin position="556"/>
        <end position="559"/>
    </location>
</feature>
<feature type="turn" evidence="37">
    <location>
        <begin position="561"/>
        <end position="563"/>
    </location>
</feature>
<feature type="helix" evidence="37">
    <location>
        <begin position="564"/>
        <end position="593"/>
    </location>
</feature>
<feature type="helix" evidence="37">
    <location>
        <begin position="601"/>
        <end position="611"/>
    </location>
</feature>
<feature type="helix" evidence="37">
    <location>
        <begin position="614"/>
        <end position="623"/>
    </location>
</feature>
<feature type="turn" evidence="37">
    <location>
        <begin position="624"/>
        <end position="626"/>
    </location>
</feature>
<feature type="helix" evidence="37">
    <location>
        <begin position="628"/>
        <end position="641"/>
    </location>
</feature>
<evidence type="ECO:0000255" key="1"/>
<evidence type="ECO:0000255" key="2">
    <source>
        <dbReference type="PROSITE-ProRule" id="PRU00521"/>
    </source>
</evidence>
<evidence type="ECO:0000269" key="3">
    <source>
    </source>
</evidence>
<evidence type="ECO:0000269" key="4">
    <source>
    </source>
</evidence>
<evidence type="ECO:0000269" key="5">
    <source>
    </source>
</evidence>
<evidence type="ECO:0000269" key="6">
    <source>
    </source>
</evidence>
<evidence type="ECO:0000269" key="7">
    <source>
    </source>
</evidence>
<evidence type="ECO:0000269" key="8">
    <source>
    </source>
</evidence>
<evidence type="ECO:0000269" key="9">
    <source>
    </source>
</evidence>
<evidence type="ECO:0000269" key="10">
    <source>
    </source>
</evidence>
<evidence type="ECO:0000269" key="11">
    <source>
    </source>
</evidence>
<evidence type="ECO:0000269" key="12">
    <source>
    </source>
</evidence>
<evidence type="ECO:0000269" key="13">
    <source>
    </source>
</evidence>
<evidence type="ECO:0000269" key="14">
    <source>
    </source>
</evidence>
<evidence type="ECO:0000269" key="15">
    <source>
    </source>
</evidence>
<evidence type="ECO:0000269" key="16">
    <source>
    </source>
</evidence>
<evidence type="ECO:0000269" key="17">
    <source>
    </source>
</evidence>
<evidence type="ECO:0000269" key="18">
    <source>
    </source>
</evidence>
<evidence type="ECO:0000269" key="19">
    <source>
    </source>
</evidence>
<evidence type="ECO:0000269" key="20">
    <source>
    </source>
</evidence>
<evidence type="ECO:0000269" key="21">
    <source>
    </source>
</evidence>
<evidence type="ECO:0000269" key="22">
    <source>
    </source>
</evidence>
<evidence type="ECO:0000269" key="23">
    <source>
    </source>
</evidence>
<evidence type="ECO:0000269" key="24">
    <source>
    </source>
</evidence>
<evidence type="ECO:0000269" key="25">
    <source>
    </source>
</evidence>
<evidence type="ECO:0000269" key="26">
    <source>
    </source>
</evidence>
<evidence type="ECO:0000269" key="27">
    <source>
    </source>
</evidence>
<evidence type="ECO:0000269" key="28">
    <source>
    </source>
</evidence>
<evidence type="ECO:0000269" key="29">
    <source>
    </source>
</evidence>
<evidence type="ECO:0000269" key="30">
    <source>
    </source>
</evidence>
<evidence type="ECO:0000269" key="31">
    <source>
    </source>
</evidence>
<evidence type="ECO:0000269" key="32">
    <source>
    </source>
</evidence>
<evidence type="ECO:0000269" key="33">
    <source>
    </source>
</evidence>
<evidence type="ECO:0000269" key="34">
    <source>
    </source>
</evidence>
<evidence type="ECO:0000305" key="35"/>
<evidence type="ECO:0000305" key="36">
    <source>
    </source>
</evidence>
<evidence type="ECO:0007829" key="37">
    <source>
        <dbReference type="PDB" id="7FIH"/>
    </source>
</evidence>
<keyword id="KW-0002">3D-structure</keyword>
<keyword id="KW-0025">Alternative splicing</keyword>
<keyword id="KW-1003">Cell membrane</keyword>
<keyword id="KW-0225">Disease variant</keyword>
<keyword id="KW-1015">Disulfide bond</keyword>
<keyword id="KW-0297">G-protein coupled receptor</keyword>
<keyword id="KW-0325">Glycoprotein</keyword>
<keyword id="KW-0433">Leucine-rich repeat</keyword>
<keyword id="KW-0449">Lipoprotein</keyword>
<keyword id="KW-0472">Membrane</keyword>
<keyword id="KW-0564">Palmitate</keyword>
<keyword id="KW-0675">Receptor</keyword>
<keyword id="KW-1185">Reference proteome</keyword>
<keyword id="KW-0677">Repeat</keyword>
<keyword id="KW-0732">Signal</keyword>
<keyword id="KW-0765">Sulfation</keyword>
<keyword id="KW-0807">Transducer</keyword>
<keyword id="KW-0812">Transmembrane</keyword>
<keyword id="KW-1133">Transmembrane helix</keyword>
<reference key="1">
    <citation type="journal article" date="1990" name="Biochem. Biophys. Res. Commun.">
        <title>Cloning and sequencing of human LH/hCG receptor cDNA.</title>
        <authorList>
            <person name="Minegish T."/>
            <person name="Nakamura K."/>
            <person name="Takakura Y."/>
            <person name="Miyamoto K."/>
            <person name="Hasegawa Y."/>
            <person name="Ibuki Y."/>
            <person name="Igarashi M."/>
        </authorList>
    </citation>
    <scope>NUCLEOTIDE SEQUENCE [MRNA]</scope>
    <scope>VARIANT SER-312</scope>
    <source>
        <tissue>Ovary</tissue>
    </source>
</reference>
<reference key="2">
    <citation type="journal article" date="1991" name="Mol. Endocrinol.">
        <title>Expression of human luteinizing hormone (LH) receptor: interaction with LH and chorionic gonadotropin from human but not equine, rat, and ovine species.</title>
        <authorList>
            <person name="Jia X.-C."/>
            <person name="Oikawa M."/>
            <person name="Bo M."/>
            <person name="Tanaka T."/>
            <person name="Ny T."/>
            <person name="Boime I."/>
            <person name="Hsueh A.J.W."/>
        </authorList>
    </citation>
    <scope>NUCLEOTIDE SELOGQUENCE [MRNA]</scope>
    <source>
        <tissue>Ovary</tissue>
    </source>
</reference>
<reference key="3">
    <citation type="journal article" date="1990" name="Mol. Endocrinol.">
        <title>Isolation of TSH and LH/CG receptor cDNAs from human thyroid: regulation by tissue specific splicing.</title>
        <authorList>
            <person name="Frazier A.L."/>
            <person name="Robbins L.S."/>
            <person name="Stork P.J."/>
            <person name="Sprengel R."/>
            <person name="Segaloff D.L."/>
            <person name="Cone R.D."/>
        </authorList>
    </citation>
    <scope>NUCLEOTIDE SEQUENCE [MRNA]</scope>
    <source>
        <tissue>Thyroid</tissue>
    </source>
</reference>
<reference key="4">
    <citation type="journal article" date="1995" name="Mol. Cell. Endocrinol.">
        <title>Structure of the human luteinizing hormone-choriogonadotropin receptor gene: unusual promoter and 5' non-coding regions.</title>
        <authorList>
            <person name="Atger M."/>
            <person name="Misrahi M."/>
            <person name="Sar S."/>
            <person name="Leflem L."/>
            <person name="Dessen P."/>
            <person name="Milgrom E."/>
        </authorList>
    </citation>
    <scope>NUCLEOTIDE SEQUENCE [GENOMIC DNA]</scope>
    <scope>VARIANTS LEU-GLN-18 INS AND SER-312</scope>
</reference>
<reference key="5">
    <citation type="journal article" date="2005" name="Nature">
        <title>Generation and annotation of the DNA sequences of human chromosomes 2 and 4.</title>
        <authorList>
            <person name="Hillier L.W."/>
            <person name="Graves T.A."/>
            <person name="Fulton R.S."/>
            <person name="Fulton L.A."/>
            <person name="Pepin K.H."/>
            <person name="Minx P."/>
            <person name="Wagner-McPherson C."/>
            <person name="Layman D."/>
            <person name="Wylie K."/>
            <person name="Sekhon M."/>
            <person name="Becker M.C."/>
            <person name="Fewell G.A."/>
            <person name="Delehaunty K.D."/>
            <person name="Miner T.L."/>
            <person name="Nash W.E."/>
            <person name="Kremitzki C."/>
            <person name="Oddy L."/>
            <person name="Du H."/>
            <person name="Sun H."/>
            <person name="Bradshaw-Cordum H."/>
            <person name="Ali J."/>
            <person name="Carter J."/>
            <person name="Cordes M."/>
            <person name="Harris A."/>
            <person name="Isak A."/>
            <person name="van Brunt A."/>
            <person name="Nguyen C."/>
            <person name="Du F."/>
            <person name="Courtney L."/>
            <person name="Kalicki J."/>
            <person name="Ozersky P."/>
            <person name="Abbott S."/>
            <person name="Armstrong J."/>
            <person name="Belter E.A."/>
            <person name="Caruso L."/>
            <person name="Cedroni M."/>
            <person name="Cotton M."/>
            <person name="Davidson T."/>
            <person name="Desai A."/>
            <person name="Elliott G."/>
            <person name="Erb T."/>
            <person name="Fronick C."/>
            <person name="Gaige T."/>
            <person name="Haakenson W."/>
            <person name="Haglund K."/>
            <person name="Holmes A."/>
            <person name="Harkins R."/>
            <person name="Kim K."/>
            <person name="Kruchowski S.S."/>
            <person name="Strong C.M."/>
            <person name="Grewal N."/>
            <person name="Goyea E."/>
            <person name="Hou S."/>
            <person name="Levy A."/>
            <person name="Martinka S."/>
            <person name="Mead K."/>
            <person name="McLellan M.D."/>
            <person name="Meyer R."/>
            <person name="Randall-Maher J."/>
            <person name="Tomlinson C."/>
            <person name="Dauphin-Kohlberg S."/>
            <person name="Kozlowicz-Reilly A."/>
            <person name="Shah N."/>
            <person name="Swearengen-Shahid S."/>
            <person name="Snider J."/>
            <person name="Strong J.T."/>
            <person name="Thompson J."/>
            <person name="Yoakum M."/>
            <person name="Leonard S."/>
            <person name="Pearman C."/>
            <person name="Trani L."/>
            <person name="Radionenko M."/>
            <person name="Waligorski J.E."/>
            <person name="Wang C."/>
            <person name="Rock S.M."/>
            <person name="Tin-Wollam A.-M."/>
            <person name="Maupin R."/>
            <person name="Latreille P."/>
            <person name="Wendl M.C."/>
            <person name="Yang S.-P."/>
            <person name="Pohl C."/>
            <person name="Wallis J.W."/>
            <person name="Spieth J."/>
            <person name="Bieri T.A."/>
            <person name="Berkowicz N."/>
            <person name="Nelson J.O."/>
            <person name="Osborne J."/>
            <person name="Ding L."/>
            <person name="Meyer R."/>
            <person name="Sabo A."/>
            <person name="Shotland Y."/>
            <person name="Sinha P."/>
            <person name="Wohldmann P.E."/>
            <person name="Cook L.L."/>
            <person name="Hickenbotham M.T."/>
            <person name="Eldred J."/>
            <person name="Williams D."/>
            <person name="Jones T.A."/>
            <person name="She X."/>
            <person name="Ciccarelli F.D."/>
            <person name="Izaurralde E."/>
            <person name="Taylor J."/>
            <person name="Schmutz J."/>
            <person name="Myers R.M."/>
            <person name="Cox D.R."/>
            <person name="Huang X."/>
            <person name="McPherson J.D."/>
            <person name="Mardis E.R."/>
            <person name="Clifton S.W."/>
            <person name="Warren W.C."/>
            <person name="Chinwalla A.T."/>
            <person name="Eddy S.R."/>
            <person name="Marra M.A."/>
            <person name="Ovcharenko I."/>
            <person name="Furey T.S."/>
            <person name="Miller W."/>
            <person name="Eichler E.E."/>
            <person name="Bork P."/>
            <person name="Suyama M."/>
            <person name="Torrents D."/>
            <person name="Waterston R.H."/>
            <person name="Wilson R.K."/>
        </authorList>
    </citation>
    <scope>NUCLEOTIDE SEQUENCE [LARGE SCALE GENOMIC DNA]</scope>
</reference>
<reference key="6">
    <citation type="journal article" date="1999" name="Hum. Hered.">
        <title>Genomic distribution and gonadal mRNA expression of two human luteinizing hormone receptor exon 1 sequences in random populations.</title>
        <authorList>
            <person name="Tsai-Morris C.-H."/>
            <person name="Geng Y."/>
            <person name="Buczko E."/>
            <person name="Dehejia A."/>
            <person name="Dufau M.L."/>
        </authorList>
    </citation>
    <scope>NUCLEOTIDE SEQUENCE [GENOMIC DNA] OF 1-54</scope>
    <scope>VARIANT LEU-GLN-18 INS</scope>
</reference>
<reference key="7">
    <citation type="journal article" date="2002" name="EMBO J.">
        <title>Tyrosine sulfation is required for agonist recognition by glycoprotein hormone receptors.</title>
        <authorList>
            <person name="Costagliola S."/>
            <person name="Panneels V."/>
            <person name="Bonomi M."/>
            <person name="Koch J."/>
            <person name="Many M.C."/>
            <person name="Smits G."/>
            <person name="Vassart G."/>
        </authorList>
    </citation>
    <scope>FUNCTION</scope>
    <scope>SUBCELLULAR LOCATION</scope>
    <scope>SULFATION AT TYR-331</scope>
    <scope>MUTAGENESIS OF TYR-331 AND TYR-333</scope>
</reference>
<reference key="8">
    <citation type="journal article" date="2005" name="Mol. Endocrinol.">
        <title>Evidence that palmitoylation of carboxyl terminus cysteine residues of the human luteinizing hormone receptor regulates postendocytic processing.</title>
        <authorList>
            <person name="Munshi U.M."/>
            <person name="Clouser C.L."/>
            <person name="Peegel H."/>
            <person name="Menon K.M."/>
        </authorList>
    </citation>
    <scope>PALMITOYLATION AT CYS-643 AND CYS-644</scope>
    <scope>MUTAGENESIS OF CYS-643 AND CYS-644</scope>
</reference>
<reference key="9">
    <citation type="journal article" date="1995" name="Structure">
        <title>Structural predictions for the ligand-binding region of glycoprotein hormone receptors and the nature of hormone-receptor interactions.</title>
        <authorList>
            <person name="Jiang X."/>
            <person name="Dreano M."/>
            <person name="Buckler D.R."/>
            <person name="Cheng S."/>
            <person name="Ythier A."/>
            <person name="Wu H."/>
            <person name="Hendrickson W.A."/>
            <person name="el Tayar N."/>
        </authorList>
    </citation>
    <scope>3D-STRUCTURE MODELING OF 51-232</scope>
</reference>
<reference key="10">
    <citation type="journal article" date="1999" name="Mol. Genet. Metab.">
        <title>A novel luteinizing hormone receptor mutation in a patient with familial male-limited precocious puberty: effect of the size of a critical amino acid on receptor activity.</title>
        <authorList>
            <person name="Wu S.M."/>
            <person name="Leschek E.W."/>
            <person name="Brain C."/>
            <person name="Chan W.Y."/>
        </authorList>
    </citation>
    <scope>VARIANT FMPP GLU-578</scope>
</reference>
<reference key="11">
    <citation type="journal article" date="2000" name="J. Clin. Endocrinol. Metab.">
        <title>Gonadotropin-independent precocious puberty due to luteinizing hormone receptor mutations in Brazilian boys: a novel constitutively activating mutation in the first transmembrane helix.</title>
        <authorList>
            <person name="Latronico A.C."/>
            <person name="Shinozaki H."/>
            <person name="Guerra G. Jr."/>
            <person name="Pereira M.A.A."/>
            <person name="Lemos Marini S.H.V."/>
            <person name="Baptista M.T.M."/>
            <person name="Arnhold I.J.P."/>
            <person name="Fanelli F."/>
            <person name="Mendonca B.B."/>
            <person name="Segaloff D.L."/>
        </authorList>
    </citation>
    <scope>VARIANTS FMPP PRO-368 AND VAL-568</scope>
    <scope>CHARACTERIZATION OF VARIANT FMPP PRO-368</scope>
</reference>
<reference key="12">
    <citation type="journal article" date="2001" name="J. Pediatr.">
        <title>Nodular Leydig cell hyperplasia in a boy with familial male-limited precocious puberty.</title>
        <authorList>
            <person name="Leschek E.W."/>
            <person name="Chan W.-Y."/>
            <person name="Diamond D.A."/>
            <person name="Kaefer M."/>
            <person name="Jones J."/>
            <person name="Barnes K.M."/>
            <person name="Cutler G.B. Jr."/>
        </authorList>
    </citation>
    <scope>VARIANT FMPP GLY-564</scope>
</reference>
<reference key="13">
    <citation type="journal article" date="2002" name="J. Clin. Endocrinol. Metab.">
        <title>Mutant luteinizing hormone receptors in a compound heterozygous patient with complete Leydig cell hypoplasia: abnormal processing causes signaling deficiency.</title>
        <authorList>
            <person name="Martens J.W.M."/>
            <person name="Lumbroso S."/>
            <person name="Verhoef-Post M."/>
            <person name="Georget V."/>
            <person name="Richter-Unruh A."/>
            <person name="Szarras-Czapnik M."/>
            <person name="Romer T.E."/>
            <person name="Brunner H.G."/>
            <person name="Themmen A.P.N."/>
            <person name="Sultan C."/>
        </authorList>
    </citation>
    <scope>VARIANTS LHR SER-343 AND ARG-543</scope>
    <scope>CHARACTERIZATION OF VARIANTS LHR SER-343 AND ARG-543</scope>
</reference>
<reference key="14">
    <citation type="journal article" date="2003" name="J. Clin. Endocrinol. Metab.">
        <title>Luteinizing hormone signaling and breast cancer: polymorphisms and age of onset.</title>
        <authorList>
            <person name="Powell B.L."/>
            <person name="Piersma D."/>
            <person name="Kevenaar M.E."/>
            <person name="van Staveren I.L."/>
            <person name="Themmen A.P.N."/>
            <person name="Iacopetta B.J."/>
            <person name="Berns E.M.J.J."/>
        </authorList>
    </citation>
    <scope>ASSOCIATION OF VARIANT LEU-GLN-18 INS WITH AGE OF BREAST CANCER ONSET</scope>
</reference>
<reference key="15">
    <citation type="journal article" date="1993" name="Nature">
        <title>A constitutively activating mutation of the luteinizing hormone receptor in familial male precocious puberty.</title>
        <authorList>
            <person name="Shenker A."/>
            <person name="Laue L."/>
            <person name="Kosugi S."/>
            <person name="Merendino J.J. Jr."/>
            <person name="Minegishi T."/>
            <person name="Cutler G.B. Jr."/>
        </authorList>
    </citation>
    <scope>VARIANT FMPP GLY-578</scope>
</reference>
<reference key="16">
    <citation type="journal article" date="1993" name="Hum. Mol. Genet.">
        <title>Cosegregation of missense mutations of the luteinizing hormone receptor gene with familial male-limited precocious puberty.</title>
        <authorList>
            <person name="Kremer H."/>
            <person name="Mariman E."/>
            <person name="Otten B.J."/>
            <person name="Moll G.W. Jr."/>
            <person name="Stoelinga G.B.A."/>
            <person name="Wit J.M."/>
            <person name="Jansen M."/>
            <person name="Drop S.L."/>
            <person name="Faas B."/>
            <person name="Ropers H.-H."/>
            <person name="Brunner H.G."/>
        </authorList>
    </citation>
    <scope>VARIANTS FMPP ILE-571 AND GLY-578</scope>
</reference>
<reference key="17">
    <citation type="journal article" date="1995" name="Hum. Mol. Genet.">
        <title>Characterization of heterogeneous mutations causing constitutive activation of the luteinizing hormone receptor in familial male precocious puberty.</title>
        <authorList>
            <person name="Kosugi S."/>
            <person name="van Dop C."/>
            <person name="Geffner M.E."/>
            <person name="Rabl W."/>
            <person name="Carel J.-C."/>
            <person name="Chaussain J.-L."/>
            <person name="Mori T."/>
            <person name="Merendino J.J. Jr."/>
            <person name="Shenker A."/>
        </authorList>
    </citation>
    <scope>VARIANT FMPP ILE-577</scope>
</reference>
<reference key="18">
    <citation type="journal article" date="1995" name="J. Clin. Endocrinol. Metab.">
        <title>A new constitutively activating point mutation in the luteinizing hormone/choriogonadotropin receptor gene in cases of male-limited precocious puberty.</title>
        <authorList>
            <person name="Yano K."/>
            <person name="Saji M."/>
            <person name="Hidaka A."/>
            <person name="Moriya N."/>
            <person name="Okuno A."/>
            <person name="Kohn L.D."/>
            <person name="Cutler G.B. Jr."/>
        </authorList>
    </citation>
    <scope>VARIANT FMPP VAL-572</scope>
</reference>
<reference key="19">
    <citation type="journal article" date="1995" name="J. Clin. Endocrinol. Metab.">
        <title>A novel mutation of the luteinizing hormone receptor gene causing male gonadotropin-independent precocious puberty.</title>
        <authorList>
            <person name="Latronico A.C."/>
            <person name="Anasti J."/>
            <person name="Arnhold I.J."/>
            <person name="Mendonca B.B."/>
            <person name="Domenice S."/>
            <person name="Albano M.C."/>
            <person name="Zachman K."/>
            <person name="Wajchenberg B.L."/>
            <person name="Tsigos C."/>
        </authorList>
    </citation>
    <scope>VARIANT FMPP VAL-568</scope>
</reference>
<reference key="20">
    <citation type="journal article" date="1995" name="Nat. Genet.">
        <title>Male pseudohermaphroditism due to a homozygous missense mutation of the luteinizing hormone receptor gene.</title>
        <authorList>
            <person name="Kremer H."/>
            <person name="Kraaij R."/>
            <person name="Toledo S.P.A."/>
            <person name="Post M."/>
            <person name="Fridman J.B."/>
            <person name="Hayashida C.Y."/>
            <person name="van Reen M."/>
            <person name="Milgrom E."/>
            <person name="Ropers H.-H."/>
            <person name="Mariman E."/>
            <person name="Themmen A.P.N."/>
            <person name="Brunner H.G."/>
        </authorList>
    </citation>
    <scope>VARIANT LHR PRO-593</scope>
</reference>
<reference key="21">
    <citation type="journal article" date="1995" name="Proc. Natl. Acad. Sci. U.S.A.">
        <title>Genetic heterogeneity of constitutively activating mutations of the human luteinizing hormone receptor in familial male-limited precocious puberty.</title>
        <authorList>
            <person name="Laue L."/>
            <person name="Chan W.Y."/>
            <person name="Hsueh A.J."/>
            <person name="Kudo M."/>
            <person name="Hsu S.Y."/>
            <person name="Wu S.M."/>
            <person name="Blomberg L."/>
            <person name="Cutler G.B. Jr."/>
        </authorList>
    </citation>
    <scope>VARIANTS FMPP LEU-542; TYR-578 AND ARG-581</scope>
</reference>
<reference key="22">
    <citation type="journal article" date="1996" name="Hum. Mutat.">
        <title>A missense (T577I) mutation in the luteinizing hormone receptor gene associated with familial male-limited precocious puberty.</title>
        <authorList>
            <person name="Cocco S."/>
            <person name="Meloni A."/>
            <person name="Marini M.G."/>
            <person name="Cao A."/>
            <person name="Moi P."/>
        </authorList>
    </citation>
    <scope>VARIANT FMPP ILE-577</scope>
</reference>
<reference key="23">
    <citation type="journal article" date="1996" name="J. Med. Genet.">
        <title>A new point mutation in the luteinising hormone receptor gene in familial and sporadic male limited precocious puberty: genotype does not always correlate with phenotype.</title>
        <authorList>
            <person name="Evans B.A.J."/>
            <person name="Bowen D.J."/>
            <person name="Smith P.J."/>
            <person name="Clayton P.E."/>
            <person name="Gregory J.W."/>
        </authorList>
    </citation>
    <scope>VARIANT FMPP THR-398</scope>
</reference>
<reference key="24">
    <citation type="journal article" date="1996" name="N. Engl. J. Med.">
        <title>Testicular and ovarian resistance to luteinizing hormone caused by inactivating mutations of the luteinizing hormone-receptor gene.</title>
        <authorList>
            <person name="Latronico A.C."/>
            <person name="Anasti J."/>
            <person name="Arnhold I.J.P."/>
            <person name="Rapaport R."/>
            <person name="Mendonca B.B."/>
            <person name="Bloise W."/>
            <person name="Castro M."/>
            <person name="Tsigos C."/>
            <person name="Chrousos G.P."/>
        </authorList>
    </citation>
    <scope>VARIANT LHR TYR-616</scope>
</reference>
<reference key="25">
    <citation type="journal article" date="1997" name="J. Clin. Endocrinol. Metab.">
        <title>Comparison of immunocytochemical and molecular features with the phenotype in a case of incomplete male pseudohermaphroditism associated with a mutation of the luteinizing hormone receptor.</title>
        <authorList>
            <person name="Misrahi M."/>
            <person name="Meduri G."/>
            <person name="Pissard S."/>
            <person name="Bouvattier C."/>
            <person name="Beau I."/>
            <person name="Loosfelt H."/>
            <person name="Jolivet A."/>
            <person name="Rappaport R."/>
            <person name="Milgrom E."/>
            <person name="Bougneres P."/>
        </authorList>
    </citation>
    <scope>VARIANT LHR ARG-131</scope>
</reference>
<reference key="26">
    <citation type="journal article" date="1998" name="Hum. Mutat.">
        <title>Polymorphisms in the coding exons of the human luteinizing hormone receptor gene.</title>
        <authorList>
            <person name="Wu S.-M."/>
            <person name="Jose M."/>
            <person name="Hallermeier K."/>
            <person name="Rennert O.M."/>
            <person name="Chan W.-Y."/>
        </authorList>
    </citation>
    <scope>VARIANTS LEU-GLN-18 INS; SER-284 AND ASN-306</scope>
</reference>
<reference key="27">
    <citation type="journal article" date="1998" name="J. Clin. Endocrinol. Metab.">
        <title>A mutation in the first transmembrane domain of the lutropin receptor causes male precocious puberty.</title>
        <authorList>
            <person name="Gromoll J."/>
            <person name="Partsch C.-J."/>
            <person name="Simoni M."/>
            <person name="Nordhoff V."/>
            <person name="Sippell W.G."/>
            <person name="Nieschlag E."/>
            <person name="Saxena B.B."/>
        </authorList>
    </citation>
    <scope>VARIANT FMPP VAL-373</scope>
</reference>
<reference key="28">
    <citation type="journal article" date="1998" name="J. Clin. Endocrinol. Metab.">
        <title>A novel mutation of the human luteinizing hormone receptor in 46XY and 46XX sisters.</title>
        <authorList>
            <person name="Stavrou S.S."/>
            <person name="Zhu Y.S."/>
            <person name="Cai L.Q."/>
            <person name="Katz M.D."/>
            <person name="Herrera C."/>
            <person name="Defillo-Ricart M."/>
            <person name="Imperato-Mcginley J."/>
        </authorList>
    </citation>
    <scope>VARIANT LHR LYS-354</scope>
</reference>
<reference key="29">
    <citation type="journal article" date="1998" name="J. Clin. Endocrinol. Metab.">
        <title>A unique constitutively activating mutation in third transmembrane helix of luteinizing hormone receptor causes sporadic male gonadotropin-independent precocious puberty.</title>
        <authorList>
            <person name="Latronico A.C."/>
            <person name="Abell A.N."/>
            <person name="Arnhold I.J."/>
            <person name="Liu X."/>
            <person name="Lins T.S."/>
            <person name="Brito V.N."/>
            <person name="Billerbeck A.E."/>
            <person name="Segaloff D.L."/>
            <person name="Mendonca B.B."/>
        </authorList>
    </citation>
    <scope>VARIANT FMPP ARG-457</scope>
</reference>
<reference key="30">
    <citation type="journal article" date="1998" name="J. Clin. Endocrinol. Metab.">
        <title>Evidences for an allelic variant of the human LC/CG receptor rather than a gene duplication: functional comparison of wild-type and variant receptors.</title>
        <authorList>
            <person name="Rodien P."/>
            <person name="Cetani F."/>
            <person name="Costagliola S."/>
            <person name="Tonacchera M."/>
            <person name="Duprez L."/>
            <person name="Minegishi T."/>
            <person name="Govaerts C."/>
            <person name="Vassart G."/>
        </authorList>
    </citation>
    <scope>VARIANT LEU-GLN-18 INS</scope>
</reference>
<reference key="31">
    <citation type="journal article" date="1998" name="Mol. Endocrinol.">
        <title>A homozygous microdeletion in helix 7 of the luteinizing hormone receptor associated with familial testicular and ovarian resistance is due to both decreased cell surface expression and impaired effector activation by the cell surface receptor.</title>
        <authorList>
            <person name="Latronico A.C."/>
            <person name="Chai Y."/>
            <person name="Arnhold I.J.P."/>
            <person name="Liu X."/>
            <person name="Mendonca B.B."/>
            <person name="Segaloff D.L."/>
        </authorList>
    </citation>
    <scope>VARIANT LHR 608-LEU-VAL-609 DEL</scope>
</reference>
<reference key="32">
    <citation type="journal article" date="1998" name="Mol. Endocrinol.">
        <title>A homozygous mutation in the luteinizing hormone receptor causes partial Leydig cell hypoplasia: correlation between receptor activity and phenotype.</title>
        <authorList>
            <person name="Martens J.W."/>
            <person name="Verhoef-Post M."/>
            <person name="Abelin N."/>
            <person name="Ezabella M."/>
            <person name="Toledo S.P."/>
            <person name="Brunner H.G."/>
            <person name="Themmen A.P."/>
        </authorList>
    </citation>
    <scope>VARIANT LHR LYS-625</scope>
</reference>
<reference key="33">
    <citation type="journal article" date="1999" name="N. Engl. J. Med.">
        <title>Leydig-cell tumors caused by an activating mutation of the gene encoding the luteinizing hormone receptor.</title>
        <authorList>
            <person name="Liu G."/>
            <person name="Duranteau L."/>
            <person name="Carel J.-C."/>
            <person name="Monroe J."/>
            <person name="Doyle D.A."/>
            <person name="Shenker A."/>
        </authorList>
    </citation>
    <scope>VARIANT LEYDIG CELL TUMOR HIS-578</scope>
</reference>
<reference key="34">
    <citation type="journal article" date="2004" name="Am. J. Med. Genet. A">
        <title>A novel missense homozygous inactivating mutation in the fourth transmembrane helix of the luteinizing hormone receptor in Leydig cell hypoplasia.</title>
        <authorList>
            <person name="Leung M.Y.-K."/>
            <person name="Al-Muslim O."/>
            <person name="Wu S.-M."/>
            <person name="Aziz A."/>
            <person name="Inam S."/>
            <person name="Awadh M."/>
            <person name="Rennert O.M."/>
            <person name="Chan W.-Y."/>
        </authorList>
    </citation>
    <scope>VARIANT LHR PRO-502</scope>
    <scope>CHARACTERIZATION OF VARIANT LCH PRO-502</scope>
</reference>
<reference key="35">
    <citation type="journal article" date="2004" name="J. Clin. Endocrinol. Metab.">
        <title>Leydig cell hypoplasia: absent luteinizing hormone receptor cell surface expression caused by a novel homozygous mutation in the extracellular domain.</title>
        <authorList>
            <person name="Richter-Unruh A."/>
            <person name="Verhoef-Post M."/>
            <person name="Malak S."/>
            <person name="Homoki J."/>
            <person name="Hauffa B.P."/>
            <person name="Themmen A.P.N."/>
        </authorList>
    </citation>
    <scope>VARIANT LHR PHE-144</scope>
    <scope>CHARACTERIZATION OF VARIANT LCH PHE-144</scope>
</reference>
<reference key="36">
    <citation type="journal article" date="2006" name="Science">
        <title>The consensus coding sequences of human breast and colorectal cancers.</title>
        <authorList>
            <person name="Sjoeblom T."/>
            <person name="Jones S."/>
            <person name="Wood L.D."/>
            <person name="Parsons D.W."/>
            <person name="Lin J."/>
            <person name="Barber T.D."/>
            <person name="Mandelker D."/>
            <person name="Leary R.J."/>
            <person name="Ptak J."/>
            <person name="Silliman N."/>
            <person name="Szabo S."/>
            <person name="Buckhaults P."/>
            <person name="Farrell C."/>
            <person name="Meeh P."/>
            <person name="Markowitz S.D."/>
            <person name="Willis J."/>
            <person name="Dawson D."/>
            <person name="Willson J.K.V."/>
            <person name="Gazdar A.F."/>
            <person name="Hartigan J."/>
            <person name="Wu L."/>
            <person name="Liu C."/>
            <person name="Parmigiani G."/>
            <person name="Park B.H."/>
            <person name="Bachman K.E."/>
            <person name="Papadopoulos N."/>
            <person name="Vogelstein B."/>
            <person name="Kinzler K.W."/>
            <person name="Velculescu V.E."/>
        </authorList>
    </citation>
    <scope>VARIANT [LARGE SCALE ANALYSIS] ASN-564</scope>
</reference>
<reference key="37">
    <citation type="journal article" date="2009" name="Hum. Mutat.">
        <title>A splice site mutation combined with a novel missense mutation of LHCGR cause male pseudohermaphroditism.</title>
        <authorList>
            <person name="Qiao J."/>
            <person name="Han B."/>
            <person name="Liu B.-L."/>
            <person name="Chen X."/>
            <person name="Ru Y."/>
            <person name="Cheng K.-X."/>
            <person name="Chen F.-G."/>
            <person name="Zhao S.-X."/>
            <person name="Liang J."/>
            <person name="Lu Y.-L."/>
            <person name="Tang J.-F."/>
            <person name="Wu Y.-X."/>
            <person name="Wu W.-L."/>
            <person name="Chen J.-L."/>
            <person name="Chen M.-D."/>
            <person name="Song H.-D."/>
        </authorList>
    </citation>
    <scope>VARIANT LHR THR-152</scope>
    <scope>CHARACTERIZATION OF VARIANT LHR THR-152</scope>
</reference>
<protein>
    <recommendedName>
        <fullName>Lutropin-choriogonadotropic hormone receptor</fullName>
        <shortName>LH/CG-R</shortName>
    </recommendedName>
    <alternativeName>
        <fullName>Luteinizing hormone receptor</fullName>
        <shortName>LHR</shortName>
        <shortName>LSH-R</shortName>
    </alternativeName>
</protein>
<accession>P22888</accession>
<accession>Q14751</accession>
<accession>Q15996</accession>
<accession>Q9UEW9</accession>